<name>SPZ9_ORYSJ</name>
<protein>
    <recommendedName>
        <fullName>Probable non-inhibitory serpin-Z9</fullName>
    </recommendedName>
    <alternativeName>
        <fullName>OrysaZ9</fullName>
    </alternativeName>
</protein>
<proteinExistence type="evidence at transcript level"/>
<gene>
    <name type="ordered locus">Os11g0222200</name>
    <name type="ordered locus">LOC_Os11g11500</name>
</gene>
<comment type="domain">
    <text evidence="1">The reactive center loop (RCL) extends out from the body of the protein and directs binding to the target protease. The protease cleaves the serpin at the reactive site within the RCL, establishing a covalent linkage between the carboxyl group of the serpin reactive site and the serine hydroxyl of the protease. The resulting inactive serpin-protease complex is highly stable (By similarity).</text>
</comment>
<comment type="similarity">
    <text evidence="4">Belongs to the serpin family.</text>
</comment>
<comment type="caution">
    <text evidence="4">According to PubMed:18060440, it is predicted to be a non-inhibitory serpin due to Gln-387 and Ile-390 which differ from the conserved residues in the reactive center loop (RCL) that is involved after cleavage in covalent linking and inhibition of the target proteinase.</text>
</comment>
<comment type="caution">
    <text evidence="4">It is uncertain whether Met-1 or Met-46 is the initiator.</text>
</comment>
<comment type="sequence caution" evidence="4">
    <conflict type="erroneous initiation">
        <sequence resource="EMBL-CDS" id="ABA92113"/>
    </conflict>
    <text>Truncated N-terminus.</text>
</comment>
<comment type="sequence caution" evidence="4">
    <conflict type="erroneous initiation">
        <sequence resource="EMBL-CDS" id="BAH95162"/>
    </conflict>
    <text>Truncated N-terminus.</text>
</comment>
<feature type="chain" id="PRO_0000334561" description="Probable non-inhibitory serpin-Z9">
    <location>
        <begin position="1"/>
        <end position="439"/>
    </location>
</feature>
<feature type="region of interest" description="Disordered" evidence="3">
    <location>
        <begin position="12"/>
        <end position="44"/>
    </location>
</feature>
<feature type="region of interest" description="RCL">
    <location>
        <begin position="389"/>
        <end position="413"/>
    </location>
</feature>
<feature type="compositionally biased region" description="Pro residues" evidence="3">
    <location>
        <begin position="31"/>
        <end position="44"/>
    </location>
</feature>
<feature type="site" description="Reactive bond" evidence="2">
    <location>
        <begin position="403"/>
        <end position="404"/>
    </location>
</feature>
<dbReference type="EMBL" id="DP000010">
    <property type="protein sequence ID" value="ABA92113.1"/>
    <property type="status" value="ALT_INIT"/>
    <property type="molecule type" value="Genomic_DNA"/>
</dbReference>
<dbReference type="EMBL" id="AP008217">
    <property type="protein sequence ID" value="BAH95162.1"/>
    <property type="status" value="ALT_INIT"/>
    <property type="molecule type" value="Genomic_DNA"/>
</dbReference>
<dbReference type="EMBL" id="AP014967">
    <property type="protein sequence ID" value="BAT13258.1"/>
    <property type="molecule type" value="Genomic_DNA"/>
</dbReference>
<dbReference type="EMBL" id="AK287588">
    <property type="status" value="NOT_ANNOTATED_CDS"/>
    <property type="molecule type" value="mRNA"/>
</dbReference>
<dbReference type="RefSeq" id="XP_015615814.1">
    <property type="nucleotide sequence ID" value="XM_015760328.1"/>
</dbReference>
<dbReference type="SMR" id="Q2R8P2"/>
<dbReference type="FunCoup" id="Q2R8P2">
    <property type="interactions" value="283"/>
</dbReference>
<dbReference type="STRING" id="39947.Q2R8P2"/>
<dbReference type="PaxDb" id="39947-Q2R8P2"/>
<dbReference type="EnsemblPlants" id="Os11t0222200-01">
    <property type="protein sequence ID" value="Os11t0222200-01"/>
    <property type="gene ID" value="Os11g0222200"/>
</dbReference>
<dbReference type="Gramene" id="Os11t0222200-01">
    <property type="protein sequence ID" value="Os11t0222200-01"/>
    <property type="gene ID" value="Os11g0222200"/>
</dbReference>
<dbReference type="KEGG" id="dosa:Os11g0222225"/>
<dbReference type="eggNOG" id="KOG2392">
    <property type="taxonomic scope" value="Eukaryota"/>
</dbReference>
<dbReference type="HOGENOM" id="CLU_023330_4_0_1"/>
<dbReference type="InParanoid" id="Q2R8P2"/>
<dbReference type="OMA" id="QHKQTGA"/>
<dbReference type="OrthoDB" id="671595at2759"/>
<dbReference type="Proteomes" id="UP000000763">
    <property type="component" value="Chromosome 11"/>
</dbReference>
<dbReference type="Proteomes" id="UP000059680">
    <property type="component" value="Chromosome 11"/>
</dbReference>
<dbReference type="GO" id="GO:0005615">
    <property type="term" value="C:extracellular space"/>
    <property type="evidence" value="ECO:0000318"/>
    <property type="project" value="GO_Central"/>
</dbReference>
<dbReference type="GO" id="GO:0004867">
    <property type="term" value="F:serine-type endopeptidase inhibitor activity"/>
    <property type="evidence" value="ECO:0007669"/>
    <property type="project" value="InterPro"/>
</dbReference>
<dbReference type="CDD" id="cd02043">
    <property type="entry name" value="serpinP_plants"/>
    <property type="match status" value="1"/>
</dbReference>
<dbReference type="FunFam" id="2.30.39.10:FF:000031">
    <property type="entry name" value="Probable non-inhibitory serpin-Z9"/>
    <property type="match status" value="1"/>
</dbReference>
<dbReference type="Gene3D" id="2.30.39.10">
    <property type="entry name" value="Alpha-1-antitrypsin, domain 1"/>
    <property type="match status" value="1"/>
</dbReference>
<dbReference type="Gene3D" id="3.30.497.10">
    <property type="entry name" value="Antithrombin, subunit I, domain 2"/>
    <property type="match status" value="1"/>
</dbReference>
<dbReference type="InterPro" id="IPR023795">
    <property type="entry name" value="Serpin_CS"/>
</dbReference>
<dbReference type="InterPro" id="IPR023796">
    <property type="entry name" value="Serpin_dom"/>
</dbReference>
<dbReference type="InterPro" id="IPR000215">
    <property type="entry name" value="Serpin_fam"/>
</dbReference>
<dbReference type="InterPro" id="IPR036186">
    <property type="entry name" value="Serpin_sf"/>
</dbReference>
<dbReference type="InterPro" id="IPR042178">
    <property type="entry name" value="Serpin_sf_1"/>
</dbReference>
<dbReference type="InterPro" id="IPR042185">
    <property type="entry name" value="Serpin_sf_2"/>
</dbReference>
<dbReference type="PANTHER" id="PTHR11461:SF189">
    <property type="entry name" value="NON-INHIBITORY SERPIN-Z9-RELATED"/>
    <property type="match status" value="1"/>
</dbReference>
<dbReference type="PANTHER" id="PTHR11461">
    <property type="entry name" value="SERINE PROTEASE INHIBITOR, SERPIN"/>
    <property type="match status" value="1"/>
</dbReference>
<dbReference type="Pfam" id="PF00079">
    <property type="entry name" value="Serpin"/>
    <property type="match status" value="1"/>
</dbReference>
<dbReference type="SMART" id="SM00093">
    <property type="entry name" value="SERPIN"/>
    <property type="match status" value="1"/>
</dbReference>
<dbReference type="SUPFAM" id="SSF56574">
    <property type="entry name" value="Serpins"/>
    <property type="match status" value="1"/>
</dbReference>
<dbReference type="PROSITE" id="PS00284">
    <property type="entry name" value="SERPIN"/>
    <property type="match status" value="1"/>
</dbReference>
<keyword id="KW-1185">Reference proteome</keyword>
<organism>
    <name type="scientific">Oryza sativa subsp. japonica</name>
    <name type="common">Rice</name>
    <dbReference type="NCBI Taxonomy" id="39947"/>
    <lineage>
        <taxon>Eukaryota</taxon>
        <taxon>Viridiplantae</taxon>
        <taxon>Streptophyta</taxon>
        <taxon>Embryophyta</taxon>
        <taxon>Tracheophyta</taxon>
        <taxon>Spermatophyta</taxon>
        <taxon>Magnoliopsida</taxon>
        <taxon>Liliopsida</taxon>
        <taxon>Poales</taxon>
        <taxon>Poaceae</taxon>
        <taxon>BOP clade</taxon>
        <taxon>Oryzoideae</taxon>
        <taxon>Oryzeae</taxon>
        <taxon>Oryzinae</taxon>
        <taxon>Oryza</taxon>
        <taxon>Oryza sativa</taxon>
    </lineage>
</organism>
<reference key="1">
    <citation type="journal article" date="2005" name="BMC Biol.">
        <title>The sequence of rice chromosomes 11 and 12, rich in disease resistance genes and recent gene duplications.</title>
        <authorList>
            <consortium name="The rice chromosomes 11 and 12 sequencing consortia"/>
        </authorList>
    </citation>
    <scope>NUCLEOTIDE SEQUENCE [LARGE SCALE GENOMIC DNA]</scope>
    <source>
        <strain>cv. Nipponbare</strain>
    </source>
</reference>
<reference key="2">
    <citation type="journal article" date="2005" name="Nature">
        <title>The map-based sequence of the rice genome.</title>
        <authorList>
            <consortium name="International rice genome sequencing project (IRGSP)"/>
        </authorList>
    </citation>
    <scope>NUCLEOTIDE SEQUENCE [LARGE SCALE GENOMIC DNA]</scope>
    <source>
        <strain>cv. Nipponbare</strain>
    </source>
</reference>
<reference key="3">
    <citation type="journal article" date="2008" name="Nucleic Acids Res.">
        <title>The rice annotation project database (RAP-DB): 2008 update.</title>
        <authorList>
            <consortium name="The rice annotation project (RAP)"/>
        </authorList>
    </citation>
    <scope>GENOME REANNOTATION</scope>
    <source>
        <strain>cv. Nipponbare</strain>
    </source>
</reference>
<reference key="4">
    <citation type="journal article" date="2013" name="Rice">
        <title>Improvement of the Oryza sativa Nipponbare reference genome using next generation sequence and optical map data.</title>
        <authorList>
            <person name="Kawahara Y."/>
            <person name="de la Bastide M."/>
            <person name="Hamilton J.P."/>
            <person name="Kanamori H."/>
            <person name="McCombie W.R."/>
            <person name="Ouyang S."/>
            <person name="Schwartz D.C."/>
            <person name="Tanaka T."/>
            <person name="Wu J."/>
            <person name="Zhou S."/>
            <person name="Childs K.L."/>
            <person name="Davidson R.M."/>
            <person name="Lin H."/>
            <person name="Quesada-Ocampo L."/>
            <person name="Vaillancourt B."/>
            <person name="Sakai H."/>
            <person name="Lee S.S."/>
            <person name="Kim J."/>
            <person name="Numa H."/>
            <person name="Itoh T."/>
            <person name="Buell C.R."/>
            <person name="Matsumoto T."/>
        </authorList>
    </citation>
    <scope>GENOME REANNOTATION</scope>
    <source>
        <strain>cv. Nipponbare</strain>
    </source>
</reference>
<reference key="5">
    <citation type="submission" date="2007-09" db="EMBL/GenBank/DDBJ databases">
        <title>Oryza sativa full length cDNA.</title>
        <authorList>
            <consortium name="The rice full-length cDNA consortium"/>
        </authorList>
    </citation>
    <scope>NUCLEOTIDE SEQUENCE [LARGE SCALE MRNA]</scope>
    <source>
        <strain>cv. Nipponbare</strain>
    </source>
</reference>
<reference key="6">
    <citation type="journal article" date="2008" name="Funct. Integr. Genomics">
        <title>Serpins in plants and green algae.</title>
        <authorList>
            <person name="Roberts T.H."/>
            <person name="Hejgaard J."/>
        </authorList>
    </citation>
    <scope>GENE FAMILY</scope>
    <scope>NOMENCLATURE</scope>
</reference>
<sequence>MQVSSYLRRALRRPPFPAGDANHRRLSSAPAPKPEAPAEAMPPPPMPTRPWGEALAAAQRAFCLPLAGRVLAAAGTGNAAVSAPAVHVSLALAAGGARGATRRQVLQALGCGGGGRGGAADAANVASRVVKRVLRDRSTSGGPRLAFAGGVWADASRSLSPEFVGLAGNVYGSAAKKADFKNKPEDAPDQINSWVKDSTKGTVTTLLPAGTIDQNTGLVLGSALYFRGRWLDRDDLRRTTEQKFYCLDGTSVEVPFVEYDRTRLFAVHDNFKVIKLPYKQGKNERKFSMYIFLPDDHDGLFELTQKIFSEPMFLEQHLPTEKCHVGISVPNFKISFQIDVKDFLKDMGLELPFLREAEFSDMIKEDDSSGPLFLSDVLHKAVLEVDQKGIEETSVSMGLGKPLPAQHFKADHPFFFMIREEVSGTVIFMGHVLDPSSRT</sequence>
<evidence type="ECO:0000250" key="1"/>
<evidence type="ECO:0000255" key="2"/>
<evidence type="ECO:0000256" key="3">
    <source>
        <dbReference type="SAM" id="MobiDB-lite"/>
    </source>
</evidence>
<evidence type="ECO:0000305" key="4"/>
<accession>Q2R8P2</accession>
<accession>A0A0N7KSM8</accession>
<accession>C7J877</accession>
<accession>Q0ITS4</accession>